<evidence type="ECO:0000255" key="1"/>
<evidence type="ECO:0000269" key="2">
    <source>
    </source>
</evidence>
<evidence type="ECO:0000303" key="3">
    <source>
    </source>
</evidence>
<evidence type="ECO:0000303" key="4">
    <source>
    </source>
</evidence>
<evidence type="ECO:0000303" key="5">
    <source ref="1"/>
</evidence>
<evidence type="ECO:0000305" key="6"/>
<evidence type="ECO:0000305" key="7">
    <source>
    </source>
</evidence>
<reference key="1">
    <citation type="submission" date="2003-05" db="EMBL/GenBank/DDBJ databases">
        <authorList>
            <person name="Zhou G."/>
            <person name="Yu R."/>
            <person name="Li H."/>
            <person name="Shen C."/>
            <person name="Zhong G."/>
            <person name="Lin L."/>
            <person name="Yang S."/>
        </authorList>
    </citation>
    <scope>NUCLEOTIDE SEQUENCE [LARGE SCALE MRNA] (ISOFORM 2)</scope>
</reference>
<reference key="2">
    <citation type="journal article" date="2004" name="Nat. Genet.">
        <title>Complete sequencing and characterization of 21,243 full-length human cDNAs.</title>
        <authorList>
            <person name="Ota T."/>
            <person name="Suzuki Y."/>
            <person name="Nishikawa T."/>
            <person name="Otsuki T."/>
            <person name="Sugiyama T."/>
            <person name="Irie R."/>
            <person name="Wakamatsu A."/>
            <person name="Hayashi K."/>
            <person name="Sato H."/>
            <person name="Nagai K."/>
            <person name="Kimura K."/>
            <person name="Makita H."/>
            <person name="Sekine M."/>
            <person name="Obayashi M."/>
            <person name="Nishi T."/>
            <person name="Shibahara T."/>
            <person name="Tanaka T."/>
            <person name="Ishii S."/>
            <person name="Yamamoto J."/>
            <person name="Saito K."/>
            <person name="Kawai Y."/>
            <person name="Isono Y."/>
            <person name="Nakamura Y."/>
            <person name="Nagahari K."/>
            <person name="Murakami K."/>
            <person name="Yasuda T."/>
            <person name="Iwayanagi T."/>
            <person name="Wagatsuma M."/>
            <person name="Shiratori A."/>
            <person name="Sudo H."/>
            <person name="Hosoiri T."/>
            <person name="Kaku Y."/>
            <person name="Kodaira H."/>
            <person name="Kondo H."/>
            <person name="Sugawara M."/>
            <person name="Takahashi M."/>
            <person name="Kanda K."/>
            <person name="Yokoi T."/>
            <person name="Furuya T."/>
            <person name="Kikkawa E."/>
            <person name="Omura Y."/>
            <person name="Abe K."/>
            <person name="Kamihara K."/>
            <person name="Katsuta N."/>
            <person name="Sato K."/>
            <person name="Tanikawa M."/>
            <person name="Yamazaki M."/>
            <person name="Ninomiya K."/>
            <person name="Ishibashi T."/>
            <person name="Yamashita H."/>
            <person name="Murakawa K."/>
            <person name="Fujimori K."/>
            <person name="Tanai H."/>
            <person name="Kimata M."/>
            <person name="Watanabe M."/>
            <person name="Hiraoka S."/>
            <person name="Chiba Y."/>
            <person name="Ishida S."/>
            <person name="Ono Y."/>
            <person name="Takiguchi S."/>
            <person name="Watanabe S."/>
            <person name="Yosida M."/>
            <person name="Hotuta T."/>
            <person name="Kusano J."/>
            <person name="Kanehori K."/>
            <person name="Takahashi-Fujii A."/>
            <person name="Hara H."/>
            <person name="Tanase T.-O."/>
            <person name="Nomura Y."/>
            <person name="Togiya S."/>
            <person name="Komai F."/>
            <person name="Hara R."/>
            <person name="Takeuchi K."/>
            <person name="Arita M."/>
            <person name="Imose N."/>
            <person name="Musashino K."/>
            <person name="Yuuki H."/>
            <person name="Oshima A."/>
            <person name="Sasaki N."/>
            <person name="Aotsuka S."/>
            <person name="Yoshikawa Y."/>
            <person name="Matsunawa H."/>
            <person name="Ichihara T."/>
            <person name="Shiohata N."/>
            <person name="Sano S."/>
            <person name="Moriya S."/>
            <person name="Momiyama H."/>
            <person name="Satoh N."/>
            <person name="Takami S."/>
            <person name="Terashima Y."/>
            <person name="Suzuki O."/>
            <person name="Nakagawa S."/>
            <person name="Senoh A."/>
            <person name="Mizoguchi H."/>
            <person name="Goto Y."/>
            <person name="Shimizu F."/>
            <person name="Wakebe H."/>
            <person name="Hishigaki H."/>
            <person name="Watanabe T."/>
            <person name="Sugiyama A."/>
            <person name="Takemoto M."/>
            <person name="Kawakami B."/>
            <person name="Yamazaki M."/>
            <person name="Watanabe K."/>
            <person name="Kumagai A."/>
            <person name="Itakura S."/>
            <person name="Fukuzumi Y."/>
            <person name="Fujimori Y."/>
            <person name="Komiyama M."/>
            <person name="Tashiro H."/>
            <person name="Tanigami A."/>
            <person name="Fujiwara T."/>
            <person name="Ono T."/>
            <person name="Yamada K."/>
            <person name="Fujii Y."/>
            <person name="Ozaki K."/>
            <person name="Hirao M."/>
            <person name="Ohmori Y."/>
            <person name="Kawabata A."/>
            <person name="Hikiji T."/>
            <person name="Kobatake N."/>
            <person name="Inagaki H."/>
            <person name="Ikema Y."/>
            <person name="Okamoto S."/>
            <person name="Okitani R."/>
            <person name="Kawakami T."/>
            <person name="Noguchi S."/>
            <person name="Itoh T."/>
            <person name="Shigeta K."/>
            <person name="Senba T."/>
            <person name="Matsumura K."/>
            <person name="Nakajima Y."/>
            <person name="Mizuno T."/>
            <person name="Morinaga M."/>
            <person name="Sasaki M."/>
            <person name="Togashi T."/>
            <person name="Oyama M."/>
            <person name="Hata H."/>
            <person name="Watanabe M."/>
            <person name="Komatsu T."/>
            <person name="Mizushima-Sugano J."/>
            <person name="Satoh T."/>
            <person name="Shirai Y."/>
            <person name="Takahashi Y."/>
            <person name="Nakagawa K."/>
            <person name="Okumura K."/>
            <person name="Nagase T."/>
            <person name="Nomura N."/>
            <person name="Kikuchi H."/>
            <person name="Masuho Y."/>
            <person name="Yamashita R."/>
            <person name="Nakai K."/>
            <person name="Yada T."/>
            <person name="Nakamura Y."/>
            <person name="Ohara O."/>
            <person name="Isogai T."/>
            <person name="Sugano S."/>
        </authorList>
    </citation>
    <scope>NUCLEOTIDE SEQUENCE [LARGE SCALE MRNA] (ISOFORMS 1 AND 2)</scope>
</reference>
<reference key="3">
    <citation type="journal article" date="2007" name="BMC Genomics">
        <title>The full-ORF clone resource of the German cDNA consortium.</title>
        <authorList>
            <person name="Bechtel S."/>
            <person name="Rosenfelder H."/>
            <person name="Duda A."/>
            <person name="Schmidt C.P."/>
            <person name="Ernst U."/>
            <person name="Wellenreuther R."/>
            <person name="Mehrle A."/>
            <person name="Schuster C."/>
            <person name="Bahr A."/>
            <person name="Bloecker H."/>
            <person name="Heubner D."/>
            <person name="Hoerlein A."/>
            <person name="Michel G."/>
            <person name="Wedler H."/>
            <person name="Koehrer K."/>
            <person name="Ottenwaelder B."/>
            <person name="Poustka A."/>
            <person name="Wiemann S."/>
            <person name="Schupp I."/>
        </authorList>
    </citation>
    <scope>NUCLEOTIDE SEQUENCE [LARGE SCALE MRNA] (ISOFORM 2)</scope>
    <source>
        <tissue>Endometrium</tissue>
    </source>
</reference>
<reference key="4">
    <citation type="journal article" date="2004" name="Nature">
        <title>The sequence and analysis of duplication-rich human chromosome 16.</title>
        <authorList>
            <person name="Martin J."/>
            <person name="Han C."/>
            <person name="Gordon L.A."/>
            <person name="Terry A."/>
            <person name="Prabhakar S."/>
            <person name="She X."/>
            <person name="Xie G."/>
            <person name="Hellsten U."/>
            <person name="Chan Y.M."/>
            <person name="Altherr M."/>
            <person name="Couronne O."/>
            <person name="Aerts A."/>
            <person name="Bajorek E."/>
            <person name="Black S."/>
            <person name="Blumer H."/>
            <person name="Branscomb E."/>
            <person name="Brown N.C."/>
            <person name="Bruno W.J."/>
            <person name="Buckingham J.M."/>
            <person name="Callen D.F."/>
            <person name="Campbell C.S."/>
            <person name="Campbell M.L."/>
            <person name="Campbell E.W."/>
            <person name="Caoile C."/>
            <person name="Challacombe J.F."/>
            <person name="Chasteen L.A."/>
            <person name="Chertkov O."/>
            <person name="Chi H.C."/>
            <person name="Christensen M."/>
            <person name="Clark L.M."/>
            <person name="Cohn J.D."/>
            <person name="Denys M."/>
            <person name="Detter J.C."/>
            <person name="Dickson M."/>
            <person name="Dimitrijevic-Bussod M."/>
            <person name="Escobar J."/>
            <person name="Fawcett J.J."/>
            <person name="Flowers D."/>
            <person name="Fotopulos D."/>
            <person name="Glavina T."/>
            <person name="Gomez M."/>
            <person name="Gonzales E."/>
            <person name="Goodstein D."/>
            <person name="Goodwin L.A."/>
            <person name="Grady D.L."/>
            <person name="Grigoriev I."/>
            <person name="Groza M."/>
            <person name="Hammon N."/>
            <person name="Hawkins T."/>
            <person name="Haydu L."/>
            <person name="Hildebrand C.E."/>
            <person name="Huang W."/>
            <person name="Israni S."/>
            <person name="Jett J."/>
            <person name="Jewett P.B."/>
            <person name="Kadner K."/>
            <person name="Kimball H."/>
            <person name="Kobayashi A."/>
            <person name="Krawczyk M.-C."/>
            <person name="Leyba T."/>
            <person name="Longmire J.L."/>
            <person name="Lopez F."/>
            <person name="Lou Y."/>
            <person name="Lowry S."/>
            <person name="Ludeman T."/>
            <person name="Manohar C.F."/>
            <person name="Mark G.A."/>
            <person name="McMurray K.L."/>
            <person name="Meincke L.J."/>
            <person name="Morgan J."/>
            <person name="Moyzis R.K."/>
            <person name="Mundt M.O."/>
            <person name="Munk A.C."/>
            <person name="Nandkeshwar R.D."/>
            <person name="Pitluck S."/>
            <person name="Pollard M."/>
            <person name="Predki P."/>
            <person name="Parson-Quintana B."/>
            <person name="Ramirez L."/>
            <person name="Rash S."/>
            <person name="Retterer J."/>
            <person name="Ricke D.O."/>
            <person name="Robinson D.L."/>
            <person name="Rodriguez A."/>
            <person name="Salamov A."/>
            <person name="Saunders E.H."/>
            <person name="Scott D."/>
            <person name="Shough T."/>
            <person name="Stallings R.L."/>
            <person name="Stalvey M."/>
            <person name="Sutherland R.D."/>
            <person name="Tapia R."/>
            <person name="Tesmer J.G."/>
            <person name="Thayer N."/>
            <person name="Thompson L.S."/>
            <person name="Tice H."/>
            <person name="Torney D.C."/>
            <person name="Tran-Gyamfi M."/>
            <person name="Tsai M."/>
            <person name="Ulanovsky L.E."/>
            <person name="Ustaszewska A."/>
            <person name="Vo N."/>
            <person name="White P.S."/>
            <person name="Williams A.L."/>
            <person name="Wills P.L."/>
            <person name="Wu J.-R."/>
            <person name="Wu K."/>
            <person name="Yang J."/>
            <person name="DeJong P."/>
            <person name="Bruce D."/>
            <person name="Doggett N.A."/>
            <person name="Deaven L."/>
            <person name="Schmutz J."/>
            <person name="Grimwood J."/>
            <person name="Richardson P."/>
            <person name="Rokhsar D.S."/>
            <person name="Eichler E.E."/>
            <person name="Gilna P."/>
            <person name="Lucas S.M."/>
            <person name="Myers R.M."/>
            <person name="Rubin E.M."/>
            <person name="Pennacchio L.A."/>
        </authorList>
    </citation>
    <scope>NUCLEOTIDE SEQUENCE [LARGE SCALE GENOMIC DNA]</scope>
</reference>
<reference key="5">
    <citation type="submission" date="2005-09" db="EMBL/GenBank/DDBJ databases">
        <authorList>
            <person name="Mural R.J."/>
            <person name="Istrail S."/>
            <person name="Sutton G.G."/>
            <person name="Florea L."/>
            <person name="Halpern A.L."/>
            <person name="Mobarry C.M."/>
            <person name="Lippert R."/>
            <person name="Walenz B."/>
            <person name="Shatkay H."/>
            <person name="Dew I."/>
            <person name="Miller J.R."/>
            <person name="Flanigan M.J."/>
            <person name="Edwards N.J."/>
            <person name="Bolanos R."/>
            <person name="Fasulo D."/>
            <person name="Halldorsson B.V."/>
            <person name="Hannenhalli S."/>
            <person name="Turner R."/>
            <person name="Yooseph S."/>
            <person name="Lu F."/>
            <person name="Nusskern D.R."/>
            <person name="Shue B.C."/>
            <person name="Zheng X.H."/>
            <person name="Zhong F."/>
            <person name="Delcher A.L."/>
            <person name="Huson D.H."/>
            <person name="Kravitz S.A."/>
            <person name="Mouchard L."/>
            <person name="Reinert K."/>
            <person name="Remington K.A."/>
            <person name="Clark A.G."/>
            <person name="Waterman M.S."/>
            <person name="Eichler E.E."/>
            <person name="Adams M.D."/>
            <person name="Hunkapiller M.W."/>
            <person name="Myers E.W."/>
            <person name="Venter J.C."/>
        </authorList>
    </citation>
    <scope>NUCLEOTIDE SEQUENCE [LARGE SCALE GENOMIC DNA]</scope>
</reference>
<reference key="6">
    <citation type="journal article" date="2004" name="Genome Res.">
        <title>The status, quality, and expansion of the NIH full-length cDNA project: the Mammalian Gene Collection (MGC).</title>
        <authorList>
            <consortium name="The MGC Project Team"/>
        </authorList>
    </citation>
    <scope>NUCLEOTIDE SEQUENCE [LARGE SCALE MRNA] (ISOFORM 1)</scope>
    <source>
        <tissue>Brain</tissue>
    </source>
</reference>
<reference key="7">
    <citation type="journal article" date="2016" name="J. Cell Sci.">
        <title>Transmembrane protein TMEM170A is a novel regulator of ER and NE morphogenesis in human cells.</title>
        <authorList>
            <person name="Christodoulou A."/>
            <person name="Santarella-Mellwig R."/>
            <person name="Santama N."/>
            <person name="Mattaj I.W."/>
        </authorList>
    </citation>
    <scope>FUNCTION</scope>
    <scope>SUBCELLULAR LOCATION</scope>
    <scope>TOPOLOGY</scope>
    <scope>INTERACTION WITH RTN4</scope>
</reference>
<proteinExistence type="evidence at protein level"/>
<accession>Q8WVE7</accession>
<accession>B2R4R3</accession>
<accession>B4DPS4</accession>
<accession>D3DUK2</accession>
<accession>Q7Z6F3</accession>
<sequence>MEREGSGGSGGSAGLLQQILSLKVVPRVGNGTLCPNSTSLCSFPEMWYGVFLWALVSSLFFHVPAGLLALFTLRHHKYGRFMSVSILLMGIVGPITAGILTSAAIAGVYRAAGKEMIPFEALTLGTGQTFCVLVVSFLRILATL</sequence>
<dbReference type="EMBL" id="AY302139">
    <property type="protein sequence ID" value="AAP57631.1"/>
    <property type="molecule type" value="mRNA"/>
</dbReference>
<dbReference type="EMBL" id="AK298475">
    <property type="protein sequence ID" value="BAG60686.1"/>
    <property type="molecule type" value="mRNA"/>
</dbReference>
<dbReference type="EMBL" id="AK311919">
    <property type="protein sequence ID" value="BAG34860.1"/>
    <property type="molecule type" value="mRNA"/>
</dbReference>
<dbReference type="EMBL" id="BX648484">
    <property type="status" value="NOT_ANNOTATED_CDS"/>
    <property type="molecule type" value="mRNA"/>
</dbReference>
<dbReference type="EMBL" id="AC009163">
    <property type="status" value="NOT_ANNOTATED_CDS"/>
    <property type="molecule type" value="Genomic_DNA"/>
</dbReference>
<dbReference type="EMBL" id="CH471114">
    <property type="protein sequence ID" value="EAW95643.1"/>
    <property type="molecule type" value="Genomic_DNA"/>
</dbReference>
<dbReference type="EMBL" id="CH471114">
    <property type="protein sequence ID" value="EAW95644.1"/>
    <property type="molecule type" value="Genomic_DNA"/>
</dbReference>
<dbReference type="EMBL" id="BC018082">
    <property type="protein sequence ID" value="AAH18082.1"/>
    <property type="molecule type" value="mRNA"/>
</dbReference>
<dbReference type="CCDS" id="CCDS10917.1">
    <molecule id="Q8WVE7-1"/>
</dbReference>
<dbReference type="CCDS" id="CCDS76901.1">
    <molecule id="Q8WVE7-2"/>
</dbReference>
<dbReference type="RefSeq" id="NP_001291925.1">
    <molecule id="Q8WVE7-2"/>
    <property type="nucleotide sequence ID" value="NM_001304996.2"/>
</dbReference>
<dbReference type="RefSeq" id="NP_660297.1">
    <molecule id="Q8WVE7-1"/>
    <property type="nucleotide sequence ID" value="NM_145254.3"/>
</dbReference>
<dbReference type="BioGRID" id="125868">
    <property type="interactions" value="14"/>
</dbReference>
<dbReference type="FunCoup" id="Q8WVE7">
    <property type="interactions" value="769"/>
</dbReference>
<dbReference type="IntAct" id="Q8WVE7">
    <property type="interactions" value="11"/>
</dbReference>
<dbReference type="STRING" id="9606.ENSP00000454404"/>
<dbReference type="TCDB" id="8.A.70.1.1">
    <property type="family name" value="the endomembrane morphogenesis tmem170a (tmem170a) family"/>
</dbReference>
<dbReference type="GlyCosmos" id="Q8WVE7">
    <property type="glycosylation" value="2 sites, No reported glycans"/>
</dbReference>
<dbReference type="GlyGen" id="Q8WVE7">
    <property type="glycosylation" value="2 sites"/>
</dbReference>
<dbReference type="iPTMnet" id="Q8WVE7"/>
<dbReference type="PhosphoSitePlus" id="Q8WVE7"/>
<dbReference type="BioMuta" id="TMEM170A"/>
<dbReference type="DMDM" id="74730840"/>
<dbReference type="jPOST" id="Q8WVE7"/>
<dbReference type="MassIVE" id="Q8WVE7"/>
<dbReference type="PaxDb" id="9606-ENSP00000454404"/>
<dbReference type="PeptideAtlas" id="Q8WVE7"/>
<dbReference type="Antibodypedia" id="71565">
    <property type="antibodies" value="4 antibodies from 4 providers"/>
</dbReference>
<dbReference type="DNASU" id="124491"/>
<dbReference type="Ensembl" id="ENST00000357613.8">
    <molecule id="Q8WVE7-2"/>
    <property type="protein sequence ID" value="ENSP00000350230.4"/>
    <property type="gene ID" value="ENSG00000166822.13"/>
</dbReference>
<dbReference type="Ensembl" id="ENST00000561878.2">
    <molecule id="Q8WVE7-1"/>
    <property type="protein sequence ID" value="ENSP00000454404.1"/>
    <property type="gene ID" value="ENSG00000166822.13"/>
</dbReference>
<dbReference type="Ensembl" id="ENST00000568559.1">
    <molecule id="Q8WVE7-2"/>
    <property type="protein sequence ID" value="ENSP00000454552.1"/>
    <property type="gene ID" value="ENSG00000166822.13"/>
</dbReference>
<dbReference type="GeneID" id="124491"/>
<dbReference type="KEGG" id="hsa:124491"/>
<dbReference type="MANE-Select" id="ENST00000561878.2">
    <property type="protein sequence ID" value="ENSP00000454404.1"/>
    <property type="RefSeq nucleotide sequence ID" value="NM_145254.3"/>
    <property type="RefSeq protein sequence ID" value="NP_660297.1"/>
</dbReference>
<dbReference type="UCSC" id="uc002fec.4">
    <molecule id="Q8WVE7-1"/>
    <property type="organism name" value="human"/>
</dbReference>
<dbReference type="AGR" id="HGNC:29577"/>
<dbReference type="CTD" id="124491"/>
<dbReference type="DisGeNET" id="124491"/>
<dbReference type="GeneCards" id="TMEM170A"/>
<dbReference type="HGNC" id="HGNC:29577">
    <property type="gene designation" value="TMEM170A"/>
</dbReference>
<dbReference type="HPA" id="ENSG00000166822">
    <property type="expression patterns" value="Low tissue specificity"/>
</dbReference>
<dbReference type="MIM" id="620630">
    <property type="type" value="gene"/>
</dbReference>
<dbReference type="neXtProt" id="NX_Q8WVE7"/>
<dbReference type="OpenTargets" id="ENSG00000166822"/>
<dbReference type="PharmGKB" id="PA162405922"/>
<dbReference type="VEuPathDB" id="HostDB:ENSG00000166822"/>
<dbReference type="eggNOG" id="KOG4349">
    <property type="taxonomic scope" value="Eukaryota"/>
</dbReference>
<dbReference type="GeneTree" id="ENSGT00940000159189"/>
<dbReference type="HOGENOM" id="CLU_149050_1_1_1"/>
<dbReference type="InParanoid" id="Q8WVE7"/>
<dbReference type="OMA" id="GRFMSVG"/>
<dbReference type="OrthoDB" id="13807at2759"/>
<dbReference type="PAN-GO" id="Q8WVE7">
    <property type="GO annotations" value="2 GO annotations based on evolutionary models"/>
</dbReference>
<dbReference type="PhylomeDB" id="Q8WVE7"/>
<dbReference type="TreeFam" id="TF314615"/>
<dbReference type="PathwayCommons" id="Q8WVE7"/>
<dbReference type="BioGRID-ORCS" id="124491">
    <property type="hits" value="13 hits in 1156 CRISPR screens"/>
</dbReference>
<dbReference type="ChiTaRS" id="TMEM170A">
    <property type="organism name" value="human"/>
</dbReference>
<dbReference type="GenomeRNAi" id="124491"/>
<dbReference type="Pharos" id="Q8WVE7">
    <property type="development level" value="Tdark"/>
</dbReference>
<dbReference type="PRO" id="PR:Q8WVE7"/>
<dbReference type="Proteomes" id="UP000005640">
    <property type="component" value="Chromosome 16"/>
</dbReference>
<dbReference type="RNAct" id="Q8WVE7">
    <property type="molecule type" value="protein"/>
</dbReference>
<dbReference type="Bgee" id="ENSG00000166822">
    <property type="expression patterns" value="Expressed in pancreatic ductal cell and 183 other cell types or tissues"/>
</dbReference>
<dbReference type="ExpressionAtlas" id="Q8WVE7">
    <property type="expression patterns" value="baseline and differential"/>
</dbReference>
<dbReference type="GO" id="GO:0005789">
    <property type="term" value="C:endoplasmic reticulum membrane"/>
    <property type="evidence" value="ECO:0000314"/>
    <property type="project" value="UniProtKB"/>
</dbReference>
<dbReference type="GO" id="GO:0005635">
    <property type="term" value="C:nuclear envelope"/>
    <property type="evidence" value="ECO:0000314"/>
    <property type="project" value="UniProtKB"/>
</dbReference>
<dbReference type="GO" id="GO:0071786">
    <property type="term" value="P:endoplasmic reticulum tubular network organization"/>
    <property type="evidence" value="ECO:0000315"/>
    <property type="project" value="UniProtKB"/>
</dbReference>
<dbReference type="GO" id="GO:0006998">
    <property type="term" value="P:nuclear envelope organization"/>
    <property type="evidence" value="ECO:0000315"/>
    <property type="project" value="UniProtKB"/>
</dbReference>
<dbReference type="GO" id="GO:0051292">
    <property type="term" value="P:nuclear pore complex assembly"/>
    <property type="evidence" value="ECO:0000315"/>
    <property type="project" value="UniProtKB"/>
</dbReference>
<dbReference type="InterPro" id="IPR019334">
    <property type="entry name" value="Transmembrane_pr_170"/>
</dbReference>
<dbReference type="PANTHER" id="PTHR22779">
    <property type="entry name" value="SD17342P"/>
    <property type="match status" value="1"/>
</dbReference>
<dbReference type="PANTHER" id="PTHR22779:SF2">
    <property type="entry name" value="TRANSMEMBRANE PROTEIN 170A"/>
    <property type="match status" value="1"/>
</dbReference>
<dbReference type="Pfam" id="PF10190">
    <property type="entry name" value="Tmemb_170"/>
    <property type="match status" value="1"/>
</dbReference>
<organism>
    <name type="scientific">Homo sapiens</name>
    <name type="common">Human</name>
    <dbReference type="NCBI Taxonomy" id="9606"/>
    <lineage>
        <taxon>Eukaryota</taxon>
        <taxon>Metazoa</taxon>
        <taxon>Chordata</taxon>
        <taxon>Craniata</taxon>
        <taxon>Vertebrata</taxon>
        <taxon>Euteleostomi</taxon>
        <taxon>Mammalia</taxon>
        <taxon>Eutheria</taxon>
        <taxon>Euarchontoglires</taxon>
        <taxon>Primates</taxon>
        <taxon>Haplorrhini</taxon>
        <taxon>Catarrhini</taxon>
        <taxon>Hominidae</taxon>
        <taxon>Homo</taxon>
    </lineage>
</organism>
<keyword id="KW-0025">Alternative splicing</keyword>
<keyword id="KW-0256">Endoplasmic reticulum</keyword>
<keyword id="KW-0325">Glycoprotein</keyword>
<keyword id="KW-0472">Membrane</keyword>
<keyword id="KW-0539">Nucleus</keyword>
<keyword id="KW-1185">Reference proteome</keyword>
<keyword id="KW-0812">Transmembrane</keyword>
<keyword id="KW-1133">Transmembrane helix</keyword>
<comment type="function">
    <text evidence="2">Acts as a regulator of endoplasmic reticulum (ER) and nuclear envelope (NE) morphogenesis. Affects the ratio between tubular ER and ER sheets by promoting sheet formation at the expense of tubules. Influences NE expansion, nuclear pore complex formation and proper localization of inner nuclear membrane proteins (PubMed:26906412).</text>
</comment>
<comment type="subunit">
    <text evidence="2">Interacts with RTN4 (PubMed:26906412).</text>
</comment>
<comment type="subcellular location">
    <subcellularLocation>
        <location evidence="2">Endoplasmic reticulum membrane</location>
        <topology evidence="1">Multi-pass membrane protein</topology>
    </subcellularLocation>
    <subcellularLocation>
        <location evidence="2">Nucleus envelope</location>
    </subcellularLocation>
</comment>
<comment type="alternative products">
    <event type="alternative splicing"/>
    <isoform>
        <id>Q8WVE7-1</id>
        <name>1</name>
        <sequence type="displayed"/>
    </isoform>
    <isoform>
        <id>Q8WVE7-2</id>
        <name>2</name>
        <sequence type="described" ref="VSP_026229"/>
    </isoform>
</comment>
<comment type="similarity">
    <text evidence="6">Belongs to the TMEM170 family.</text>
</comment>
<gene>
    <name type="primary">TMEM170A</name>
    <name type="synonym">TMEM170</name>
</gene>
<name>T170A_HUMAN</name>
<feature type="chain" id="PRO_0000291759" description="Transmembrane protein 170A">
    <location>
        <begin position="1"/>
        <end position="144"/>
    </location>
</feature>
<feature type="topological domain" description="Lumenal" evidence="7">
    <location>
        <begin position="1"/>
        <end position="50"/>
    </location>
</feature>
<feature type="transmembrane region" description="Helical" evidence="1">
    <location>
        <begin position="51"/>
        <end position="71"/>
    </location>
</feature>
<feature type="topological domain" description="Cytoplasmic" evidence="7">
    <location>
        <begin position="72"/>
        <end position="85"/>
    </location>
</feature>
<feature type="transmembrane region" description="Helical" evidence="1">
    <location>
        <begin position="86"/>
        <end position="106"/>
    </location>
</feature>
<feature type="topological domain" description="Lumenal" evidence="7">
    <location>
        <begin position="107"/>
        <end position="116"/>
    </location>
</feature>
<feature type="transmembrane region" description="Helical" evidence="1">
    <location>
        <begin position="117"/>
        <end position="137"/>
    </location>
</feature>
<feature type="topological domain" description="Cytoplasmic" evidence="7">
    <location>
        <begin position="138"/>
        <end position="144"/>
    </location>
</feature>
<feature type="glycosylation site" description="N-linked (GlcNAc...) asparagine" evidence="1">
    <location>
        <position position="30"/>
    </location>
</feature>
<feature type="glycosylation site" description="N-linked (GlcNAc...) asparagine" evidence="1">
    <location>
        <position position="36"/>
    </location>
</feature>
<feature type="splice variant" id="VSP_026229" description="In isoform 2." evidence="3 4 5">
    <location>
        <begin position="80"/>
        <end position="102"/>
    </location>
</feature>
<protein>
    <recommendedName>
        <fullName>Transmembrane protein 170A</fullName>
    </recommendedName>
</protein>